<reference key="1">
    <citation type="submission" date="2008-10" db="EMBL/GenBank/DDBJ databases">
        <title>Genome sequence of Bacillus cereus B4264.</title>
        <authorList>
            <person name="Dodson R.J."/>
            <person name="Durkin A.S."/>
            <person name="Rosovitz M.J."/>
            <person name="Rasko D.A."/>
            <person name="Hoffmaster A."/>
            <person name="Ravel J."/>
            <person name="Sutton G."/>
        </authorList>
    </citation>
    <scope>NUCLEOTIDE SEQUENCE [LARGE SCALE GENOMIC DNA]</scope>
    <source>
        <strain>B4264</strain>
    </source>
</reference>
<name>PCKA_BACC4</name>
<protein>
    <recommendedName>
        <fullName evidence="1">Phosphoenolpyruvate carboxykinase (ATP)</fullName>
        <shortName evidence="1">PCK</shortName>
        <shortName evidence="1">PEP carboxykinase</shortName>
        <shortName evidence="1">PEPCK</shortName>
        <ecNumber evidence="1">4.1.1.49</ecNumber>
    </recommendedName>
</protein>
<comment type="function">
    <text evidence="1">Involved in the gluconeogenesis. Catalyzes the conversion of oxaloacetate (OAA) to phosphoenolpyruvate (PEP) through direct phosphoryl transfer between the nucleoside triphosphate and OAA.</text>
</comment>
<comment type="catalytic activity">
    <reaction evidence="1">
        <text>oxaloacetate + ATP = phosphoenolpyruvate + ADP + CO2</text>
        <dbReference type="Rhea" id="RHEA:18617"/>
        <dbReference type="ChEBI" id="CHEBI:16452"/>
        <dbReference type="ChEBI" id="CHEBI:16526"/>
        <dbReference type="ChEBI" id="CHEBI:30616"/>
        <dbReference type="ChEBI" id="CHEBI:58702"/>
        <dbReference type="ChEBI" id="CHEBI:456216"/>
        <dbReference type="EC" id="4.1.1.49"/>
    </reaction>
</comment>
<comment type="cofactor">
    <cofactor evidence="1">
        <name>Mn(2+)</name>
        <dbReference type="ChEBI" id="CHEBI:29035"/>
    </cofactor>
    <text evidence="1">Binds 1 Mn(2+) ion per subunit.</text>
</comment>
<comment type="pathway">
    <text evidence="1">Carbohydrate biosynthesis; gluconeogenesis.</text>
</comment>
<comment type="subcellular location">
    <subcellularLocation>
        <location evidence="1">Cytoplasm</location>
    </subcellularLocation>
</comment>
<comment type="similarity">
    <text evidence="1">Belongs to the phosphoenolpyruvate carboxykinase (ATP) family.</text>
</comment>
<accession>B7H9C8</accession>
<dbReference type="EC" id="4.1.1.49" evidence="1"/>
<dbReference type="EMBL" id="CP001176">
    <property type="protein sequence ID" value="ACK60285.1"/>
    <property type="molecule type" value="Genomic_DNA"/>
</dbReference>
<dbReference type="RefSeq" id="WP_000108815.1">
    <property type="nucleotide sequence ID" value="NZ_VEHB01000005.1"/>
</dbReference>
<dbReference type="SMR" id="B7H9C8"/>
<dbReference type="KEGG" id="bcb:BCB4264_A4879"/>
<dbReference type="HOGENOM" id="CLU_018247_0_1_9"/>
<dbReference type="UniPathway" id="UPA00138"/>
<dbReference type="Proteomes" id="UP000007096">
    <property type="component" value="Chromosome"/>
</dbReference>
<dbReference type="GO" id="GO:0005829">
    <property type="term" value="C:cytosol"/>
    <property type="evidence" value="ECO:0007669"/>
    <property type="project" value="TreeGrafter"/>
</dbReference>
<dbReference type="GO" id="GO:0005524">
    <property type="term" value="F:ATP binding"/>
    <property type="evidence" value="ECO:0007669"/>
    <property type="project" value="UniProtKB-UniRule"/>
</dbReference>
<dbReference type="GO" id="GO:0046872">
    <property type="term" value="F:metal ion binding"/>
    <property type="evidence" value="ECO:0007669"/>
    <property type="project" value="UniProtKB-KW"/>
</dbReference>
<dbReference type="GO" id="GO:0004612">
    <property type="term" value="F:phosphoenolpyruvate carboxykinase (ATP) activity"/>
    <property type="evidence" value="ECO:0007669"/>
    <property type="project" value="UniProtKB-UniRule"/>
</dbReference>
<dbReference type="GO" id="GO:0006094">
    <property type="term" value="P:gluconeogenesis"/>
    <property type="evidence" value="ECO:0007669"/>
    <property type="project" value="UniProtKB-UniRule"/>
</dbReference>
<dbReference type="CDD" id="cd00484">
    <property type="entry name" value="PEPCK_ATP"/>
    <property type="match status" value="1"/>
</dbReference>
<dbReference type="FunFam" id="2.170.8.10:FF:000001">
    <property type="entry name" value="Phosphoenolpyruvate carboxykinase (ATP)"/>
    <property type="match status" value="1"/>
</dbReference>
<dbReference type="FunFam" id="3.40.449.10:FF:000001">
    <property type="entry name" value="Phosphoenolpyruvate carboxykinase (ATP)"/>
    <property type="match status" value="1"/>
</dbReference>
<dbReference type="Gene3D" id="3.90.228.20">
    <property type="match status" value="1"/>
</dbReference>
<dbReference type="Gene3D" id="3.40.449.10">
    <property type="entry name" value="Phosphoenolpyruvate Carboxykinase, domain 1"/>
    <property type="match status" value="1"/>
</dbReference>
<dbReference type="Gene3D" id="2.170.8.10">
    <property type="entry name" value="Phosphoenolpyruvate Carboxykinase, domain 2"/>
    <property type="match status" value="1"/>
</dbReference>
<dbReference type="HAMAP" id="MF_00453">
    <property type="entry name" value="PEPCK_ATP"/>
    <property type="match status" value="1"/>
</dbReference>
<dbReference type="InterPro" id="IPR001272">
    <property type="entry name" value="PEP_carboxykinase_ATP"/>
</dbReference>
<dbReference type="InterPro" id="IPR013035">
    <property type="entry name" value="PEP_carboxykinase_C"/>
</dbReference>
<dbReference type="InterPro" id="IPR008210">
    <property type="entry name" value="PEP_carboxykinase_N"/>
</dbReference>
<dbReference type="InterPro" id="IPR015994">
    <property type="entry name" value="PEPCK_ATP_CS"/>
</dbReference>
<dbReference type="NCBIfam" id="TIGR00224">
    <property type="entry name" value="pckA"/>
    <property type="match status" value="1"/>
</dbReference>
<dbReference type="NCBIfam" id="NF006820">
    <property type="entry name" value="PRK09344.1-2"/>
    <property type="match status" value="1"/>
</dbReference>
<dbReference type="NCBIfam" id="NF006821">
    <property type="entry name" value="PRK09344.1-3"/>
    <property type="match status" value="1"/>
</dbReference>
<dbReference type="PANTHER" id="PTHR30031:SF0">
    <property type="entry name" value="PHOSPHOENOLPYRUVATE CARBOXYKINASE (ATP)"/>
    <property type="match status" value="1"/>
</dbReference>
<dbReference type="PANTHER" id="PTHR30031">
    <property type="entry name" value="PHOSPHOENOLPYRUVATE CARBOXYKINASE ATP"/>
    <property type="match status" value="1"/>
</dbReference>
<dbReference type="Pfam" id="PF01293">
    <property type="entry name" value="PEPCK_ATP"/>
    <property type="match status" value="1"/>
</dbReference>
<dbReference type="PIRSF" id="PIRSF006294">
    <property type="entry name" value="PEP_crbxkin"/>
    <property type="match status" value="1"/>
</dbReference>
<dbReference type="SUPFAM" id="SSF68923">
    <property type="entry name" value="PEP carboxykinase N-terminal domain"/>
    <property type="match status" value="1"/>
</dbReference>
<dbReference type="SUPFAM" id="SSF53795">
    <property type="entry name" value="PEP carboxykinase-like"/>
    <property type="match status" value="1"/>
</dbReference>
<dbReference type="PROSITE" id="PS00532">
    <property type="entry name" value="PEPCK_ATP"/>
    <property type="match status" value="1"/>
</dbReference>
<organism>
    <name type="scientific">Bacillus cereus (strain B4264)</name>
    <dbReference type="NCBI Taxonomy" id="405532"/>
    <lineage>
        <taxon>Bacteria</taxon>
        <taxon>Bacillati</taxon>
        <taxon>Bacillota</taxon>
        <taxon>Bacilli</taxon>
        <taxon>Bacillales</taxon>
        <taxon>Bacillaceae</taxon>
        <taxon>Bacillus</taxon>
        <taxon>Bacillus cereus group</taxon>
    </lineage>
</organism>
<keyword id="KW-0067">ATP-binding</keyword>
<keyword id="KW-0963">Cytoplasm</keyword>
<keyword id="KW-0210">Decarboxylase</keyword>
<keyword id="KW-0312">Gluconeogenesis</keyword>
<keyword id="KW-0456">Lyase</keyword>
<keyword id="KW-0464">Manganese</keyword>
<keyword id="KW-0479">Metal-binding</keyword>
<keyword id="KW-0547">Nucleotide-binding</keyword>
<evidence type="ECO:0000255" key="1">
    <source>
        <dbReference type="HAMAP-Rule" id="MF_00453"/>
    </source>
</evidence>
<gene>
    <name evidence="1" type="primary">pckA</name>
    <name type="ordered locus">BCB4264_A4879</name>
</gene>
<sequence length="528" mass="57880">MSTVNVQIGLHELLNGSNAQIQLSVPQLVEKVLMRNEGKLTSTGAVSASTGKYTGRSPKDKFIVKEASVADKIAWGAVNQPISEEHFNKLYTKVLEYLKEKEELFVFKGFAGADRNYRLPIQVINEYAWHNLFVHQLFIRPTEEELTTHESGFTIVSAPNFKADPAVDGTNSEAFIMVSFEKRIVLIGGTEYAGEMKKSIFSIMNFLLPEQDILSMHCSANVGEEGDVALFFGLSGTGKTTLSADPNRKLIGDDEHGWSDNGVFNIEGGCYAKCVNLSHEKEPQIFDAITFGSVLENVIINDQTRIADYNDTTLTENTRAAYPMHAIDNIVLPSVAGHPNTIIFLTADASGVLPPISKLSKEQAMYHFLSGYTSKLAGTERGVTSPQATFSTCFGSPFLPLDASRYAEMLGEKIEKHDAKVFLVNTGWTGGEYGVGKRMNLGYTRAMIQAALNGELAKTETAKHDIFGLEVPLHVPGVPDEVLMPEQTWADKAAYKAKAIELANEFKANFKKFDSVSEDIINLGGPIA</sequence>
<feature type="chain" id="PRO_1000125055" description="Phosphoenolpyruvate carboxykinase (ATP)">
    <location>
        <begin position="1"/>
        <end position="528"/>
    </location>
</feature>
<feature type="binding site" evidence="1">
    <location>
        <position position="56"/>
    </location>
    <ligand>
        <name>substrate</name>
    </ligand>
</feature>
<feature type="binding site" evidence="1">
    <location>
        <position position="192"/>
    </location>
    <ligand>
        <name>substrate</name>
    </ligand>
</feature>
<feature type="binding site" evidence="1">
    <location>
        <position position="198"/>
    </location>
    <ligand>
        <name>ATP</name>
        <dbReference type="ChEBI" id="CHEBI:30616"/>
    </ligand>
</feature>
<feature type="binding site" evidence="1">
    <location>
        <position position="198"/>
    </location>
    <ligand>
        <name>Mn(2+)</name>
        <dbReference type="ChEBI" id="CHEBI:29035"/>
    </ligand>
</feature>
<feature type="binding site" evidence="1">
    <location>
        <position position="198"/>
    </location>
    <ligand>
        <name>substrate</name>
    </ligand>
</feature>
<feature type="binding site" evidence="1">
    <location>
        <position position="217"/>
    </location>
    <ligand>
        <name>ATP</name>
        <dbReference type="ChEBI" id="CHEBI:30616"/>
    </ligand>
</feature>
<feature type="binding site" evidence="1">
    <location>
        <position position="217"/>
    </location>
    <ligand>
        <name>Mn(2+)</name>
        <dbReference type="ChEBI" id="CHEBI:29035"/>
    </ligand>
</feature>
<feature type="binding site" evidence="1">
    <location>
        <begin position="233"/>
        <end position="241"/>
    </location>
    <ligand>
        <name>ATP</name>
        <dbReference type="ChEBI" id="CHEBI:30616"/>
    </ligand>
</feature>
<feature type="binding site" evidence="1">
    <location>
        <position position="254"/>
    </location>
    <ligand>
        <name>Mn(2+)</name>
        <dbReference type="ChEBI" id="CHEBI:29035"/>
    </ligand>
</feature>
<feature type="binding site" evidence="1">
    <location>
        <position position="282"/>
    </location>
    <ligand>
        <name>ATP</name>
        <dbReference type="ChEBI" id="CHEBI:30616"/>
    </ligand>
</feature>
<feature type="binding site" evidence="1">
    <location>
        <position position="319"/>
    </location>
    <ligand>
        <name>ATP</name>
        <dbReference type="ChEBI" id="CHEBI:30616"/>
    </ligand>
</feature>
<feature type="binding site" evidence="1">
    <location>
        <position position="319"/>
    </location>
    <ligand>
        <name>substrate</name>
    </ligand>
</feature>
<feature type="binding site" evidence="1">
    <location>
        <position position="444"/>
    </location>
    <ligand>
        <name>ATP</name>
        <dbReference type="ChEBI" id="CHEBI:30616"/>
    </ligand>
</feature>
<proteinExistence type="inferred from homology"/>